<comment type="function">
    <text evidence="1">Component of the Mediator complex, a coactivator involved in the regulated transcription of nearly all RNA polymerase II-dependent genes. Mediator functions as a bridge to convey information from gene-specific regulatory proteins to the basal RNA polymerase II transcription machinery. Mediator is recruited to promoters by direct interactions with regulatory proteins and serves as a scaffold for the assembly of a functional preinitiation complex with RNA polymerase II and the general transcription factors (By similarity).</text>
</comment>
<comment type="subunit">
    <text evidence="1">Component of the Mediator complex.</text>
</comment>
<comment type="subcellular location">
    <subcellularLocation>
        <location evidence="1">Nucleus</location>
    </subcellularLocation>
</comment>
<comment type="similarity">
    <text evidence="2">Belongs to the Mediator complex subunit 18 family.</text>
</comment>
<feature type="chain" id="PRO_0000304763" description="Mediator of RNA polymerase II transcription subunit 18">
    <location>
        <begin position="1"/>
        <end position="268"/>
    </location>
</feature>
<dbReference type="EMBL" id="DS027698">
    <property type="protein sequence ID" value="EAW15903.1"/>
    <property type="molecule type" value="Genomic_DNA"/>
</dbReference>
<dbReference type="RefSeq" id="XP_001257800.1">
    <property type="nucleotide sequence ID" value="XM_001257799.1"/>
</dbReference>
<dbReference type="SMR" id="A1DM82"/>
<dbReference type="STRING" id="331117.A1DM82"/>
<dbReference type="EnsemblFungi" id="EAW15903">
    <property type="protein sequence ID" value="EAW15903"/>
    <property type="gene ID" value="NFIA_052480"/>
</dbReference>
<dbReference type="GeneID" id="4584315"/>
<dbReference type="KEGG" id="nfi:NFIA_052480"/>
<dbReference type="VEuPathDB" id="FungiDB:NFIA_052480"/>
<dbReference type="eggNOG" id="ENOG502S7EN">
    <property type="taxonomic scope" value="Eukaryota"/>
</dbReference>
<dbReference type="HOGENOM" id="CLU_084516_0_0_1"/>
<dbReference type="OMA" id="PVHQHHE"/>
<dbReference type="OrthoDB" id="5348092at2759"/>
<dbReference type="Proteomes" id="UP000006702">
    <property type="component" value="Unassembled WGS sequence"/>
</dbReference>
<dbReference type="GO" id="GO:0070847">
    <property type="term" value="C:core mediator complex"/>
    <property type="evidence" value="ECO:0007669"/>
    <property type="project" value="TreeGrafter"/>
</dbReference>
<dbReference type="GO" id="GO:0016592">
    <property type="term" value="C:mediator complex"/>
    <property type="evidence" value="ECO:0007669"/>
    <property type="project" value="InterPro"/>
</dbReference>
<dbReference type="GO" id="GO:0003712">
    <property type="term" value="F:transcription coregulator activity"/>
    <property type="evidence" value="ECO:0007669"/>
    <property type="project" value="InterPro"/>
</dbReference>
<dbReference type="GO" id="GO:0006357">
    <property type="term" value="P:regulation of transcription by RNA polymerase II"/>
    <property type="evidence" value="ECO:0007669"/>
    <property type="project" value="InterPro"/>
</dbReference>
<dbReference type="GO" id="GO:0006369">
    <property type="term" value="P:termination of RNA polymerase II transcription"/>
    <property type="evidence" value="ECO:0007669"/>
    <property type="project" value="TreeGrafter"/>
</dbReference>
<dbReference type="FunFam" id="2.40.320.10:FF:000007">
    <property type="entry name" value="Mediator of RNA polymerase II transcription subunit 18"/>
    <property type="match status" value="1"/>
</dbReference>
<dbReference type="Gene3D" id="2.40.320.10">
    <property type="entry name" value="Hypothetical Protein Pfu-838710-001"/>
    <property type="match status" value="1"/>
</dbReference>
<dbReference type="InterPro" id="IPR019095">
    <property type="entry name" value="Mediator_Med18"/>
</dbReference>
<dbReference type="PANTHER" id="PTHR13321:SF2">
    <property type="entry name" value="MEDIATOR OF RNA POLYMERASE II TRANSCRIPTION SUBUNIT 18"/>
    <property type="match status" value="1"/>
</dbReference>
<dbReference type="PANTHER" id="PTHR13321">
    <property type="entry name" value="MEDIATOR OF RNA POLYMERASE II TRANSCRIPTION, SUBUNIT 18"/>
    <property type="match status" value="1"/>
</dbReference>
<dbReference type="Pfam" id="PF09637">
    <property type="entry name" value="Med18"/>
    <property type="match status" value="1"/>
</dbReference>
<keyword id="KW-0010">Activator</keyword>
<keyword id="KW-0539">Nucleus</keyword>
<keyword id="KW-1185">Reference proteome</keyword>
<keyword id="KW-0804">Transcription</keyword>
<keyword id="KW-0805">Transcription regulation</keyword>
<proteinExistence type="inferred from homology"/>
<accession>A1DM82</accession>
<sequence>MHELLLFASVPAHQHHELLQQLAGLTAMQPQHRLERRLVFKAYRKPGLVNVRVGASQDLQGAELQRLNKMLNGGMFYTQVVGPVSEADFGAPASPVADQDAHMSGTDEKLSVRTHYYDYENQPWKLEFRDIPEAATRSAVTARLMSSASLPKGDITVPMNAWGYNFVTEYAVEGDIFIHNDIVIFLHRVLHYPTESQEPRRQLPALNEMTPLDRSGGYVLQAAITVQDGGNQETMKIASQHLFGLREQLKSAVRLEQADRLSLDTRAK</sequence>
<name>MED18_NEOFI</name>
<protein>
    <recommendedName>
        <fullName>Mediator of RNA polymerase II transcription subunit 18</fullName>
    </recommendedName>
    <alternativeName>
        <fullName>Mediator complex subunit 18</fullName>
    </alternativeName>
</protein>
<evidence type="ECO:0000250" key="1"/>
<evidence type="ECO:0000305" key="2"/>
<organism>
    <name type="scientific">Neosartorya fischeri (strain ATCC 1020 / DSM 3700 / CBS 544.65 / FGSC A1164 / JCM 1740 / NRRL 181 / WB 181)</name>
    <name type="common">Aspergillus fischerianus</name>
    <dbReference type="NCBI Taxonomy" id="331117"/>
    <lineage>
        <taxon>Eukaryota</taxon>
        <taxon>Fungi</taxon>
        <taxon>Dikarya</taxon>
        <taxon>Ascomycota</taxon>
        <taxon>Pezizomycotina</taxon>
        <taxon>Eurotiomycetes</taxon>
        <taxon>Eurotiomycetidae</taxon>
        <taxon>Eurotiales</taxon>
        <taxon>Aspergillaceae</taxon>
        <taxon>Aspergillus</taxon>
        <taxon>Aspergillus subgen. Fumigati</taxon>
    </lineage>
</organism>
<reference key="1">
    <citation type="journal article" date="2008" name="PLoS Genet.">
        <title>Genomic islands in the pathogenic filamentous fungus Aspergillus fumigatus.</title>
        <authorList>
            <person name="Fedorova N.D."/>
            <person name="Khaldi N."/>
            <person name="Joardar V.S."/>
            <person name="Maiti R."/>
            <person name="Amedeo P."/>
            <person name="Anderson M.J."/>
            <person name="Crabtree J."/>
            <person name="Silva J.C."/>
            <person name="Badger J.H."/>
            <person name="Albarraq A."/>
            <person name="Angiuoli S."/>
            <person name="Bussey H."/>
            <person name="Bowyer P."/>
            <person name="Cotty P.J."/>
            <person name="Dyer P.S."/>
            <person name="Egan A."/>
            <person name="Galens K."/>
            <person name="Fraser-Liggett C.M."/>
            <person name="Haas B.J."/>
            <person name="Inman J.M."/>
            <person name="Kent R."/>
            <person name="Lemieux S."/>
            <person name="Malavazi I."/>
            <person name="Orvis J."/>
            <person name="Roemer T."/>
            <person name="Ronning C.M."/>
            <person name="Sundaram J.P."/>
            <person name="Sutton G."/>
            <person name="Turner G."/>
            <person name="Venter J.C."/>
            <person name="White O.R."/>
            <person name="Whitty B.R."/>
            <person name="Youngman P."/>
            <person name="Wolfe K.H."/>
            <person name="Goldman G.H."/>
            <person name="Wortman J.R."/>
            <person name="Jiang B."/>
            <person name="Denning D.W."/>
            <person name="Nierman W.C."/>
        </authorList>
    </citation>
    <scope>NUCLEOTIDE SEQUENCE [LARGE SCALE GENOMIC DNA]</scope>
    <source>
        <strain>ATCC 1020 / DSM 3700 / CBS 544.65 / FGSC A1164 / JCM 1740 / NRRL 181 / WB 181</strain>
    </source>
</reference>
<gene>
    <name type="primary">srb5</name>
    <name type="synonym">med18</name>
    <name type="ORF">NFIA_052480</name>
</gene>